<feature type="chain" id="PRO_0000328905" description="UPF0213 protein AHA_3736">
    <location>
        <begin position="1"/>
        <end position="136"/>
    </location>
</feature>
<feature type="domain" description="GIY-YIG" evidence="1">
    <location>
        <begin position="17"/>
        <end position="92"/>
    </location>
</feature>
<feature type="region of interest" description="Disordered" evidence="2">
    <location>
        <begin position="114"/>
        <end position="136"/>
    </location>
</feature>
<feature type="compositionally biased region" description="Basic and acidic residues" evidence="2">
    <location>
        <begin position="124"/>
        <end position="136"/>
    </location>
</feature>
<organism>
    <name type="scientific">Aeromonas hydrophila subsp. hydrophila (strain ATCC 7966 / DSM 30187 / BCRC 13018 / CCUG 14551 / JCM 1027 / KCTC 2358 / NCIMB 9240 / NCTC 8049)</name>
    <dbReference type="NCBI Taxonomy" id="380703"/>
    <lineage>
        <taxon>Bacteria</taxon>
        <taxon>Pseudomonadati</taxon>
        <taxon>Pseudomonadota</taxon>
        <taxon>Gammaproteobacteria</taxon>
        <taxon>Aeromonadales</taxon>
        <taxon>Aeromonadaceae</taxon>
        <taxon>Aeromonas</taxon>
    </lineage>
</organism>
<keyword id="KW-1185">Reference proteome</keyword>
<gene>
    <name type="ordered locus">AHA_3736</name>
</gene>
<evidence type="ECO:0000255" key="1">
    <source>
        <dbReference type="HAMAP-Rule" id="MF_01029"/>
    </source>
</evidence>
<evidence type="ECO:0000256" key="2">
    <source>
        <dbReference type="SAM" id="MobiDB-lite"/>
    </source>
</evidence>
<dbReference type="EMBL" id="CP000462">
    <property type="protein sequence ID" value="ABK37365.1"/>
    <property type="molecule type" value="Genomic_DNA"/>
</dbReference>
<dbReference type="RefSeq" id="WP_011707451.1">
    <property type="nucleotide sequence ID" value="NC_008570.1"/>
</dbReference>
<dbReference type="RefSeq" id="YP_858184.1">
    <property type="nucleotide sequence ID" value="NC_008570.1"/>
</dbReference>
<dbReference type="SMR" id="A0KPI3"/>
<dbReference type="STRING" id="380703.AHA_3736"/>
<dbReference type="EnsemblBacteria" id="ABK37365">
    <property type="protein sequence ID" value="ABK37365"/>
    <property type="gene ID" value="AHA_3736"/>
</dbReference>
<dbReference type="GeneID" id="4488504"/>
<dbReference type="KEGG" id="aha:AHA_3736"/>
<dbReference type="PATRIC" id="fig|380703.7.peg.3710"/>
<dbReference type="eggNOG" id="COG2827">
    <property type="taxonomic scope" value="Bacteria"/>
</dbReference>
<dbReference type="HOGENOM" id="CLU_157737_0_0_6"/>
<dbReference type="OrthoDB" id="9797095at2"/>
<dbReference type="Proteomes" id="UP000000756">
    <property type="component" value="Chromosome"/>
</dbReference>
<dbReference type="CDD" id="cd10456">
    <property type="entry name" value="GIY-YIG_UPF0213"/>
    <property type="match status" value="1"/>
</dbReference>
<dbReference type="Gene3D" id="3.40.1440.10">
    <property type="entry name" value="GIY-YIG endonuclease"/>
    <property type="match status" value="1"/>
</dbReference>
<dbReference type="HAMAP" id="MF_01029">
    <property type="entry name" value="UPF0213"/>
    <property type="match status" value="1"/>
</dbReference>
<dbReference type="InterPro" id="IPR000305">
    <property type="entry name" value="GIY-YIG_endonuc"/>
</dbReference>
<dbReference type="InterPro" id="IPR035901">
    <property type="entry name" value="GIY-YIG_endonuc_sf"/>
</dbReference>
<dbReference type="InterPro" id="IPR050190">
    <property type="entry name" value="UPF0213_domain"/>
</dbReference>
<dbReference type="InterPro" id="IPR022992">
    <property type="entry name" value="UPF0213_GIY-YIG_endonuc"/>
</dbReference>
<dbReference type="PANTHER" id="PTHR34477">
    <property type="entry name" value="UPF0213 PROTEIN YHBQ"/>
    <property type="match status" value="1"/>
</dbReference>
<dbReference type="PANTHER" id="PTHR34477:SF1">
    <property type="entry name" value="UPF0213 PROTEIN YHBQ"/>
    <property type="match status" value="1"/>
</dbReference>
<dbReference type="Pfam" id="PF01541">
    <property type="entry name" value="GIY-YIG"/>
    <property type="match status" value="1"/>
</dbReference>
<dbReference type="SUPFAM" id="SSF82771">
    <property type="entry name" value="GIY-YIG endonuclease"/>
    <property type="match status" value="1"/>
</dbReference>
<dbReference type="PROSITE" id="PS50164">
    <property type="entry name" value="GIY_YIG"/>
    <property type="match status" value="1"/>
</dbReference>
<name>Y3736_AERHH</name>
<comment type="similarity">
    <text evidence="1">Belongs to the UPF0213 family.</text>
</comment>
<proteinExistence type="inferred from homology"/>
<sequence length="136" mass="15275">MREPAPGAEPVATPPASHWFIYMVRTASGLLYTGISTDPLRRLRQHQSGKGSRALRGKGPLTLAWQQAVGEKGAALRLEYRLKQQSKAFKEQLLTQPERWLACSQSWLATAQTQKRPRYAAAKEGSDNRECQRQVD</sequence>
<reference key="1">
    <citation type="journal article" date="2006" name="J. Bacteriol.">
        <title>Genome sequence of Aeromonas hydrophila ATCC 7966T: jack of all trades.</title>
        <authorList>
            <person name="Seshadri R."/>
            <person name="Joseph S.W."/>
            <person name="Chopra A.K."/>
            <person name="Sha J."/>
            <person name="Shaw J."/>
            <person name="Graf J."/>
            <person name="Haft D.H."/>
            <person name="Wu M."/>
            <person name="Ren Q."/>
            <person name="Rosovitz M.J."/>
            <person name="Madupu R."/>
            <person name="Tallon L."/>
            <person name="Kim M."/>
            <person name="Jin S."/>
            <person name="Vuong H."/>
            <person name="Stine O.C."/>
            <person name="Ali A."/>
            <person name="Horneman A.J."/>
            <person name="Heidelberg J.F."/>
        </authorList>
    </citation>
    <scope>NUCLEOTIDE SEQUENCE [LARGE SCALE GENOMIC DNA]</scope>
    <source>
        <strain>ATCC 7966 / DSM 30187 / BCRC 13018 / CCUG 14551 / JCM 1027 / KCTC 2358 / NCIMB 9240 / NCTC 8049</strain>
    </source>
</reference>
<accession>A0KPI3</accession>
<protein>
    <recommendedName>
        <fullName evidence="1">UPF0213 protein AHA_3736</fullName>
    </recommendedName>
</protein>